<comment type="function">
    <text evidence="1">May be involved in transcriptional regulation.</text>
</comment>
<comment type="subcellular location">
    <subcellularLocation>
        <location evidence="9">Nucleus</location>
    </subcellularLocation>
</comment>
<comment type="alternative products">
    <event type="alternative splicing"/>
    <isoform>
        <id>Q96N22-1</id>
        <name>1</name>
        <sequence type="displayed"/>
    </isoform>
    <isoform>
        <id>Q96N22-2</id>
        <name>2</name>
        <sequence type="described" ref="VSP_039878"/>
    </isoform>
</comment>
<comment type="similarity">
    <text evidence="9">Belongs to the krueppel C2H2-type zinc-finger protein family.</text>
</comment>
<comment type="sequence caution" evidence="9">
    <conflict type="miscellaneous discrepancy">
        <sequence resource="EMBL" id="BC062216"/>
    </conflict>
    <text>Contaminating sequence. Potential poly-A sequence.</text>
</comment>
<name>ZN681_HUMAN</name>
<gene>
    <name type="primary">ZNF681</name>
</gene>
<evidence type="ECO:0000250" key="1"/>
<evidence type="ECO:0000255" key="2">
    <source>
        <dbReference type="PROSITE-ProRule" id="PRU00042"/>
    </source>
</evidence>
<evidence type="ECO:0000255" key="3">
    <source>
        <dbReference type="PROSITE-ProRule" id="PRU00119"/>
    </source>
</evidence>
<evidence type="ECO:0000256" key="4">
    <source>
        <dbReference type="SAM" id="MobiDB-lite"/>
    </source>
</evidence>
<evidence type="ECO:0000269" key="5">
    <source>
    </source>
</evidence>
<evidence type="ECO:0000269" key="6">
    <source>
    </source>
</evidence>
<evidence type="ECO:0000303" key="7">
    <source>
    </source>
</evidence>
<evidence type="ECO:0000303" key="8">
    <source>
    </source>
</evidence>
<evidence type="ECO:0000305" key="9"/>
<reference key="1">
    <citation type="journal article" date="2004" name="Nat. Genet.">
        <title>Complete sequencing and characterization of 21,243 full-length human cDNAs.</title>
        <authorList>
            <person name="Ota T."/>
            <person name="Suzuki Y."/>
            <person name="Nishikawa T."/>
            <person name="Otsuki T."/>
            <person name="Sugiyama T."/>
            <person name="Irie R."/>
            <person name="Wakamatsu A."/>
            <person name="Hayashi K."/>
            <person name="Sato H."/>
            <person name="Nagai K."/>
            <person name="Kimura K."/>
            <person name="Makita H."/>
            <person name="Sekine M."/>
            <person name="Obayashi M."/>
            <person name="Nishi T."/>
            <person name="Shibahara T."/>
            <person name="Tanaka T."/>
            <person name="Ishii S."/>
            <person name="Yamamoto J."/>
            <person name="Saito K."/>
            <person name="Kawai Y."/>
            <person name="Isono Y."/>
            <person name="Nakamura Y."/>
            <person name="Nagahari K."/>
            <person name="Murakami K."/>
            <person name="Yasuda T."/>
            <person name="Iwayanagi T."/>
            <person name="Wagatsuma M."/>
            <person name="Shiratori A."/>
            <person name="Sudo H."/>
            <person name="Hosoiri T."/>
            <person name="Kaku Y."/>
            <person name="Kodaira H."/>
            <person name="Kondo H."/>
            <person name="Sugawara M."/>
            <person name="Takahashi M."/>
            <person name="Kanda K."/>
            <person name="Yokoi T."/>
            <person name="Furuya T."/>
            <person name="Kikkawa E."/>
            <person name="Omura Y."/>
            <person name="Abe K."/>
            <person name="Kamihara K."/>
            <person name="Katsuta N."/>
            <person name="Sato K."/>
            <person name="Tanikawa M."/>
            <person name="Yamazaki M."/>
            <person name="Ninomiya K."/>
            <person name="Ishibashi T."/>
            <person name="Yamashita H."/>
            <person name="Murakawa K."/>
            <person name="Fujimori K."/>
            <person name="Tanai H."/>
            <person name="Kimata M."/>
            <person name="Watanabe M."/>
            <person name="Hiraoka S."/>
            <person name="Chiba Y."/>
            <person name="Ishida S."/>
            <person name="Ono Y."/>
            <person name="Takiguchi S."/>
            <person name="Watanabe S."/>
            <person name="Yosida M."/>
            <person name="Hotuta T."/>
            <person name="Kusano J."/>
            <person name="Kanehori K."/>
            <person name="Takahashi-Fujii A."/>
            <person name="Hara H."/>
            <person name="Tanase T.-O."/>
            <person name="Nomura Y."/>
            <person name="Togiya S."/>
            <person name="Komai F."/>
            <person name="Hara R."/>
            <person name="Takeuchi K."/>
            <person name="Arita M."/>
            <person name="Imose N."/>
            <person name="Musashino K."/>
            <person name="Yuuki H."/>
            <person name="Oshima A."/>
            <person name="Sasaki N."/>
            <person name="Aotsuka S."/>
            <person name="Yoshikawa Y."/>
            <person name="Matsunawa H."/>
            <person name="Ichihara T."/>
            <person name="Shiohata N."/>
            <person name="Sano S."/>
            <person name="Moriya S."/>
            <person name="Momiyama H."/>
            <person name="Satoh N."/>
            <person name="Takami S."/>
            <person name="Terashima Y."/>
            <person name="Suzuki O."/>
            <person name="Nakagawa S."/>
            <person name="Senoh A."/>
            <person name="Mizoguchi H."/>
            <person name="Goto Y."/>
            <person name="Shimizu F."/>
            <person name="Wakebe H."/>
            <person name="Hishigaki H."/>
            <person name="Watanabe T."/>
            <person name="Sugiyama A."/>
            <person name="Takemoto M."/>
            <person name="Kawakami B."/>
            <person name="Yamazaki M."/>
            <person name="Watanabe K."/>
            <person name="Kumagai A."/>
            <person name="Itakura S."/>
            <person name="Fukuzumi Y."/>
            <person name="Fujimori Y."/>
            <person name="Komiyama M."/>
            <person name="Tashiro H."/>
            <person name="Tanigami A."/>
            <person name="Fujiwara T."/>
            <person name="Ono T."/>
            <person name="Yamada K."/>
            <person name="Fujii Y."/>
            <person name="Ozaki K."/>
            <person name="Hirao M."/>
            <person name="Ohmori Y."/>
            <person name="Kawabata A."/>
            <person name="Hikiji T."/>
            <person name="Kobatake N."/>
            <person name="Inagaki H."/>
            <person name="Ikema Y."/>
            <person name="Okamoto S."/>
            <person name="Okitani R."/>
            <person name="Kawakami T."/>
            <person name="Noguchi S."/>
            <person name="Itoh T."/>
            <person name="Shigeta K."/>
            <person name="Senba T."/>
            <person name="Matsumura K."/>
            <person name="Nakajima Y."/>
            <person name="Mizuno T."/>
            <person name="Morinaga M."/>
            <person name="Sasaki M."/>
            <person name="Togashi T."/>
            <person name="Oyama M."/>
            <person name="Hata H."/>
            <person name="Watanabe M."/>
            <person name="Komatsu T."/>
            <person name="Mizushima-Sugano J."/>
            <person name="Satoh T."/>
            <person name="Shirai Y."/>
            <person name="Takahashi Y."/>
            <person name="Nakagawa K."/>
            <person name="Okumura K."/>
            <person name="Nagase T."/>
            <person name="Nomura N."/>
            <person name="Kikuchi H."/>
            <person name="Masuho Y."/>
            <person name="Yamashita R."/>
            <person name="Nakai K."/>
            <person name="Yada T."/>
            <person name="Nakamura Y."/>
            <person name="Ohara O."/>
            <person name="Isogai T."/>
            <person name="Sugano S."/>
        </authorList>
    </citation>
    <scope>NUCLEOTIDE SEQUENCE [LARGE SCALE MRNA] (ISOFORM 2)</scope>
    <scope>VARIANTS HIS-84; SER-295 AND LYS-367</scope>
    <source>
        <tissue>Brain</tissue>
    </source>
</reference>
<reference key="2">
    <citation type="journal article" date="2004" name="Nature">
        <title>The DNA sequence and biology of human chromosome 19.</title>
        <authorList>
            <person name="Grimwood J."/>
            <person name="Gordon L.A."/>
            <person name="Olsen A.S."/>
            <person name="Terry A."/>
            <person name="Schmutz J."/>
            <person name="Lamerdin J.E."/>
            <person name="Hellsten U."/>
            <person name="Goodstein D."/>
            <person name="Couronne O."/>
            <person name="Tran-Gyamfi M."/>
            <person name="Aerts A."/>
            <person name="Altherr M."/>
            <person name="Ashworth L."/>
            <person name="Bajorek E."/>
            <person name="Black S."/>
            <person name="Branscomb E."/>
            <person name="Caenepeel S."/>
            <person name="Carrano A.V."/>
            <person name="Caoile C."/>
            <person name="Chan Y.M."/>
            <person name="Christensen M."/>
            <person name="Cleland C.A."/>
            <person name="Copeland A."/>
            <person name="Dalin E."/>
            <person name="Dehal P."/>
            <person name="Denys M."/>
            <person name="Detter J.C."/>
            <person name="Escobar J."/>
            <person name="Flowers D."/>
            <person name="Fotopulos D."/>
            <person name="Garcia C."/>
            <person name="Georgescu A.M."/>
            <person name="Glavina T."/>
            <person name="Gomez M."/>
            <person name="Gonzales E."/>
            <person name="Groza M."/>
            <person name="Hammon N."/>
            <person name="Hawkins T."/>
            <person name="Haydu L."/>
            <person name="Ho I."/>
            <person name="Huang W."/>
            <person name="Israni S."/>
            <person name="Jett J."/>
            <person name="Kadner K."/>
            <person name="Kimball H."/>
            <person name="Kobayashi A."/>
            <person name="Larionov V."/>
            <person name="Leem S.-H."/>
            <person name="Lopez F."/>
            <person name="Lou Y."/>
            <person name="Lowry S."/>
            <person name="Malfatti S."/>
            <person name="Martinez D."/>
            <person name="McCready P.M."/>
            <person name="Medina C."/>
            <person name="Morgan J."/>
            <person name="Nelson K."/>
            <person name="Nolan M."/>
            <person name="Ovcharenko I."/>
            <person name="Pitluck S."/>
            <person name="Pollard M."/>
            <person name="Popkie A.P."/>
            <person name="Predki P."/>
            <person name="Quan G."/>
            <person name="Ramirez L."/>
            <person name="Rash S."/>
            <person name="Retterer J."/>
            <person name="Rodriguez A."/>
            <person name="Rogers S."/>
            <person name="Salamov A."/>
            <person name="Salazar A."/>
            <person name="She X."/>
            <person name="Smith D."/>
            <person name="Slezak T."/>
            <person name="Solovyev V."/>
            <person name="Thayer N."/>
            <person name="Tice H."/>
            <person name="Tsai M."/>
            <person name="Ustaszewska A."/>
            <person name="Vo N."/>
            <person name="Wagner M."/>
            <person name="Wheeler J."/>
            <person name="Wu K."/>
            <person name="Xie G."/>
            <person name="Yang J."/>
            <person name="Dubchak I."/>
            <person name="Furey T.S."/>
            <person name="DeJong P."/>
            <person name="Dickson M."/>
            <person name="Gordon D."/>
            <person name="Eichler E.E."/>
            <person name="Pennacchio L.A."/>
            <person name="Richardson P."/>
            <person name="Stubbs L."/>
            <person name="Rokhsar D.S."/>
            <person name="Myers R.M."/>
            <person name="Rubin E.M."/>
            <person name="Lucas S.M."/>
        </authorList>
    </citation>
    <scope>NUCLEOTIDE SEQUENCE [LARGE SCALE GENOMIC DNA]</scope>
</reference>
<reference key="3">
    <citation type="journal article" date="2004" name="Genome Res.">
        <title>The status, quality, and expansion of the NIH full-length cDNA project: the Mammalian Gene Collection (MGC).</title>
        <authorList>
            <consortium name="The MGC Project Team"/>
        </authorList>
    </citation>
    <scope>NUCLEOTIDE SEQUENCE [LARGE SCALE MRNA] OF 1-189 (ISOFORM 2)</scope>
    <scope>VARIANT HIS-84</scope>
</reference>
<organism>
    <name type="scientific">Homo sapiens</name>
    <name type="common">Human</name>
    <dbReference type="NCBI Taxonomy" id="9606"/>
    <lineage>
        <taxon>Eukaryota</taxon>
        <taxon>Metazoa</taxon>
        <taxon>Chordata</taxon>
        <taxon>Craniata</taxon>
        <taxon>Vertebrata</taxon>
        <taxon>Euteleostomi</taxon>
        <taxon>Mammalia</taxon>
        <taxon>Eutheria</taxon>
        <taxon>Euarchontoglires</taxon>
        <taxon>Primates</taxon>
        <taxon>Haplorrhini</taxon>
        <taxon>Catarrhini</taxon>
        <taxon>Hominidae</taxon>
        <taxon>Homo</taxon>
    </lineage>
</organism>
<proteinExistence type="evidence at protein level"/>
<sequence length="645" mass="75059">MEPLKFRDVAIEFSLEEWQCLDTIQQNLYRNVMLENYRNLVFLGIVVSKPDLITCLEQEKEPWTRKRHRMVAEPPVICSHFAQDFSPEQNIKDSFQKVTPRRYGKCEHENLQLSKSVDECKVQKGGYNGLNQCLPTTQSKIFQCDKYMKIFHKFSNLNGHKVRHTRKKPFKYKEFGKSFCIFSNLTQHKIICTRVNFYKCEDCGKAFNGSSIFTKHKRIHIGEKSYICEECGKACNQFTNLTTHKIIYTRDKLYKREECSKAFNLSSHITTHTIIHTGENPYKREECDKAFNQSLTLTTHKIIHTREKLNEYKECGKAFNQSSHLTRHKIIHTGEKPYKCEECGKAFNQSSHLTRHKIIHTGEKPYRCEECGKAFRQSSHLTTHKIIHTGEKPYKCEECGKAFNKSSHLTRHKSIHTGEKPYQCEKCGKASNQSSNLTEHKNIHTEEKPYKCEECGKAFNQFSNLTTHKRIHTGEKPYKCEECGKAFNQSSILTTHKRIHTGEKSYKCEECGKAFYRSSKLTEHKKIHTGEKPYTCEECGKAFNHSSHLATHKVIHTGEKPYQCEECGKAFNQSSHLTRHKRIHTGEKPYQCEKCGKAFNQSSNLTGHKKIHTGEKLYKPKRCNSDFENTSKFSKHKRNYAGEKS</sequence>
<accession>Q96N22</accession>
<accession>B3KVF7</accession>
<protein>
    <recommendedName>
        <fullName>Zinc finger protein 681</fullName>
    </recommendedName>
</protein>
<keyword id="KW-0025">Alternative splicing</keyword>
<keyword id="KW-0238">DNA-binding</keyword>
<keyword id="KW-0479">Metal-binding</keyword>
<keyword id="KW-0539">Nucleus</keyword>
<keyword id="KW-1267">Proteomics identification</keyword>
<keyword id="KW-1185">Reference proteome</keyword>
<keyword id="KW-0677">Repeat</keyword>
<keyword id="KW-0804">Transcription</keyword>
<keyword id="KW-0805">Transcription regulation</keyword>
<keyword id="KW-0862">Zinc</keyword>
<keyword id="KW-0863">Zinc-finger</keyword>
<feature type="chain" id="PRO_0000305137" description="Zinc finger protein 681">
    <location>
        <begin position="1"/>
        <end position="645"/>
    </location>
</feature>
<feature type="domain" description="KRAB" evidence="3">
    <location>
        <begin position="4"/>
        <end position="75"/>
    </location>
</feature>
<feature type="zinc finger region" description="C2H2-type 1; degenerate" evidence="2">
    <location>
        <begin position="142"/>
        <end position="164"/>
    </location>
</feature>
<feature type="zinc finger region" description="C2H2-type 2" evidence="2">
    <location>
        <begin position="198"/>
        <end position="220"/>
    </location>
</feature>
<feature type="zinc finger region" description="C2H2-type 3; degenerate" evidence="2">
    <location>
        <begin position="226"/>
        <end position="248"/>
    </location>
</feature>
<feature type="zinc finger region" description="C2H2-type 4; degenerate" evidence="2">
    <location>
        <begin position="254"/>
        <end position="276"/>
    </location>
</feature>
<feature type="zinc finger region" description="C2H2-type 5; degenerate" evidence="2">
    <location>
        <begin position="282"/>
        <end position="304"/>
    </location>
</feature>
<feature type="zinc finger region" description="C2H2-type 6; degenerate" evidence="2">
    <location>
        <begin position="310"/>
        <end position="332"/>
    </location>
</feature>
<feature type="zinc finger region" description="C2H2-type 7" evidence="2">
    <location>
        <begin position="338"/>
        <end position="360"/>
    </location>
</feature>
<feature type="zinc finger region" description="C2H2-type 8" evidence="2">
    <location>
        <begin position="366"/>
        <end position="388"/>
    </location>
</feature>
<feature type="zinc finger region" description="C2H2-type 9" evidence="2">
    <location>
        <begin position="394"/>
        <end position="416"/>
    </location>
</feature>
<feature type="zinc finger region" description="C2H2-type 10" evidence="2">
    <location>
        <begin position="422"/>
        <end position="444"/>
    </location>
</feature>
<feature type="zinc finger region" description="C2H2-type 11" evidence="2">
    <location>
        <begin position="450"/>
        <end position="472"/>
    </location>
</feature>
<feature type="zinc finger region" description="C2H2-type 12" evidence="2">
    <location>
        <begin position="478"/>
        <end position="500"/>
    </location>
</feature>
<feature type="zinc finger region" description="C2H2-type 13" evidence="2">
    <location>
        <begin position="506"/>
        <end position="528"/>
    </location>
</feature>
<feature type="zinc finger region" description="C2H2-type 14" evidence="2">
    <location>
        <begin position="534"/>
        <end position="556"/>
    </location>
</feature>
<feature type="zinc finger region" description="C2H2-type 15" evidence="2">
    <location>
        <begin position="562"/>
        <end position="584"/>
    </location>
</feature>
<feature type="zinc finger region" description="C2H2-type 16" evidence="2">
    <location>
        <begin position="590"/>
        <end position="612"/>
    </location>
</feature>
<feature type="region of interest" description="Disordered" evidence="4">
    <location>
        <begin position="626"/>
        <end position="645"/>
    </location>
</feature>
<feature type="splice variant" id="VSP_039878" description="In isoform 2." evidence="7 8">
    <location>
        <begin position="1"/>
        <end position="69"/>
    </location>
</feature>
<feature type="sequence variant" id="VAR_035167" description="In dbSNP:rs7248674." evidence="5 6">
    <original>D</original>
    <variation>H</variation>
    <location>
        <position position="84"/>
    </location>
</feature>
<feature type="sequence variant" id="VAR_035168" description="In dbSNP:rs1818989." evidence="5">
    <original>L</original>
    <variation>S</variation>
    <location>
        <position position="295"/>
    </location>
</feature>
<feature type="sequence variant" id="VAR_063679" description="In dbSNP:rs1818990." evidence="5">
    <original>R</original>
    <variation>K</variation>
    <location>
        <position position="367"/>
    </location>
</feature>
<feature type="sequence variant" id="VAR_063680" description="In dbSNP:rs1852433.">
    <original>H</original>
    <variation>Q</variation>
    <location>
        <position position="548"/>
    </location>
</feature>
<feature type="sequence conflict" description="In Ref. 1; BAG53769." evidence="9" ref="1">
    <original>V</original>
    <variation>A</variation>
    <location>
        <position position="98"/>
    </location>
</feature>
<feature type="sequence conflict" description="In Ref. 3; BC062216." evidence="9" ref="3">
    <original>L</original>
    <variation>S</variation>
    <location>
        <position position="134"/>
    </location>
</feature>
<feature type="sequence conflict" description="In Ref. 3; BC062216." evidence="9" ref="3">
    <original>H</original>
    <variation>Q</variation>
    <location>
        <position position="188"/>
    </location>
</feature>
<feature type="sequence conflict" description="In Ref. 1; BAG53769." evidence="9" ref="1">
    <original>K</original>
    <variation>R</variation>
    <location>
        <position position="224"/>
    </location>
</feature>
<feature type="sequence conflict" description="In Ref. 1; BAG53769." evidence="9" ref="1">
    <original>Y</original>
    <variation>C</variation>
    <location>
        <position position="282"/>
    </location>
</feature>
<feature type="sequence conflict" description="In Ref. 1; BAG53769." evidence="9" ref="1">
    <original>K</original>
    <variation>R</variation>
    <location>
        <position position="485"/>
    </location>
</feature>
<dbReference type="EMBL" id="AK056088">
    <property type="protein sequence ID" value="BAB71090.1"/>
    <property type="molecule type" value="mRNA"/>
</dbReference>
<dbReference type="EMBL" id="AK122869">
    <property type="protein sequence ID" value="BAG53769.1"/>
    <property type="molecule type" value="mRNA"/>
</dbReference>
<dbReference type="EMBL" id="AC073544">
    <property type="status" value="NOT_ANNOTATED_CDS"/>
    <property type="molecule type" value="Genomic_DNA"/>
</dbReference>
<dbReference type="EMBL" id="AC139769">
    <property type="status" value="NOT_ANNOTATED_CDS"/>
    <property type="molecule type" value="Genomic_DNA"/>
</dbReference>
<dbReference type="EMBL" id="BC062216">
    <property type="status" value="NOT_ANNOTATED_CDS"/>
    <property type="molecule type" value="mRNA"/>
</dbReference>
<dbReference type="CCDS" id="CCDS12414.2">
    <molecule id="Q96N22-1"/>
</dbReference>
<dbReference type="RefSeq" id="NP_612143.2">
    <molecule id="Q96N22-1"/>
    <property type="nucleotide sequence ID" value="NM_138286.3"/>
</dbReference>
<dbReference type="SMR" id="Q96N22"/>
<dbReference type="BioGRID" id="127130">
    <property type="interactions" value="1"/>
</dbReference>
<dbReference type="FunCoup" id="Q96N22">
    <property type="interactions" value="2"/>
</dbReference>
<dbReference type="STRING" id="9606.ENSP00000384000"/>
<dbReference type="iPTMnet" id="Q96N22"/>
<dbReference type="PhosphoSitePlus" id="Q96N22"/>
<dbReference type="BioMuta" id="ZNF681"/>
<dbReference type="DMDM" id="308153533"/>
<dbReference type="jPOST" id="Q96N22"/>
<dbReference type="MassIVE" id="Q96N22"/>
<dbReference type="PaxDb" id="9606-ENSP00000384000"/>
<dbReference type="PeptideAtlas" id="Q96N22"/>
<dbReference type="ProteomicsDB" id="77456">
    <molecule id="Q96N22-1"/>
</dbReference>
<dbReference type="ProteomicsDB" id="77457">
    <molecule id="Q96N22-2"/>
</dbReference>
<dbReference type="Antibodypedia" id="28767">
    <property type="antibodies" value="46 antibodies from 11 providers"/>
</dbReference>
<dbReference type="DNASU" id="148213"/>
<dbReference type="Ensembl" id="ENST00000402377.3">
    <molecule id="Q96N22-1"/>
    <property type="protein sequence ID" value="ENSP00000384000.3"/>
    <property type="gene ID" value="ENSG00000196172.9"/>
</dbReference>
<dbReference type="GeneID" id="148213"/>
<dbReference type="KEGG" id="hsa:148213"/>
<dbReference type="MANE-Select" id="ENST00000402377.3">
    <property type="protein sequence ID" value="ENSP00000384000.3"/>
    <property type="RefSeq nucleotide sequence ID" value="NM_138286.3"/>
    <property type="RefSeq protein sequence ID" value="NP_612143.2"/>
</dbReference>
<dbReference type="UCSC" id="uc002nrk.4">
    <molecule id="Q96N22-1"/>
    <property type="organism name" value="human"/>
</dbReference>
<dbReference type="AGR" id="HGNC:26457"/>
<dbReference type="CTD" id="148213"/>
<dbReference type="GeneCards" id="ZNF681"/>
<dbReference type="HGNC" id="HGNC:26457">
    <property type="gene designation" value="ZNF681"/>
</dbReference>
<dbReference type="HPA" id="ENSG00000196172">
    <property type="expression patterns" value="Low tissue specificity"/>
</dbReference>
<dbReference type="neXtProt" id="NX_Q96N22"/>
<dbReference type="OpenTargets" id="ENSG00000196172"/>
<dbReference type="PharmGKB" id="PA142670482"/>
<dbReference type="VEuPathDB" id="HostDB:ENSG00000196172"/>
<dbReference type="eggNOG" id="KOG1721">
    <property type="taxonomic scope" value="Eukaryota"/>
</dbReference>
<dbReference type="GeneTree" id="ENSGT00940000154251"/>
<dbReference type="HOGENOM" id="CLU_002678_17_1_1"/>
<dbReference type="InParanoid" id="Q96N22"/>
<dbReference type="OMA" id="KACNQFT"/>
<dbReference type="OrthoDB" id="1405595at2759"/>
<dbReference type="PAN-GO" id="Q96N22">
    <property type="GO annotations" value="4 GO annotations based on evolutionary models"/>
</dbReference>
<dbReference type="PhylomeDB" id="Q96N22"/>
<dbReference type="TreeFam" id="TF342117"/>
<dbReference type="PathwayCommons" id="Q96N22"/>
<dbReference type="Reactome" id="R-HSA-212436">
    <property type="pathway name" value="Generic Transcription Pathway"/>
</dbReference>
<dbReference type="BioGRID-ORCS" id="148213">
    <property type="hits" value="18 hits in 1138 CRISPR screens"/>
</dbReference>
<dbReference type="ChiTaRS" id="ZNF681">
    <property type="organism name" value="human"/>
</dbReference>
<dbReference type="GenomeRNAi" id="148213"/>
<dbReference type="Pharos" id="Q96N22">
    <property type="development level" value="Tdark"/>
</dbReference>
<dbReference type="PRO" id="PR:Q96N22"/>
<dbReference type="Proteomes" id="UP000005640">
    <property type="component" value="Chromosome 19"/>
</dbReference>
<dbReference type="RNAct" id="Q96N22">
    <property type="molecule type" value="protein"/>
</dbReference>
<dbReference type="Bgee" id="ENSG00000196172">
    <property type="expression patterns" value="Expressed in primordial germ cell in gonad and 111 other cell types or tissues"/>
</dbReference>
<dbReference type="ExpressionAtlas" id="Q96N22">
    <property type="expression patterns" value="baseline and differential"/>
</dbReference>
<dbReference type="GO" id="GO:0005634">
    <property type="term" value="C:nucleus"/>
    <property type="evidence" value="ECO:0000318"/>
    <property type="project" value="GO_Central"/>
</dbReference>
<dbReference type="GO" id="GO:0000981">
    <property type="term" value="F:DNA-binding transcription factor activity, RNA polymerase II-specific"/>
    <property type="evidence" value="ECO:0000318"/>
    <property type="project" value="GO_Central"/>
</dbReference>
<dbReference type="GO" id="GO:0000978">
    <property type="term" value="F:RNA polymerase II cis-regulatory region sequence-specific DNA binding"/>
    <property type="evidence" value="ECO:0000318"/>
    <property type="project" value="GO_Central"/>
</dbReference>
<dbReference type="GO" id="GO:0008270">
    <property type="term" value="F:zinc ion binding"/>
    <property type="evidence" value="ECO:0007669"/>
    <property type="project" value="UniProtKB-KW"/>
</dbReference>
<dbReference type="GO" id="GO:0006357">
    <property type="term" value="P:regulation of transcription by RNA polymerase II"/>
    <property type="evidence" value="ECO:0000318"/>
    <property type="project" value="GO_Central"/>
</dbReference>
<dbReference type="CDD" id="cd07765">
    <property type="entry name" value="KRAB_A-box"/>
    <property type="match status" value="1"/>
</dbReference>
<dbReference type="FunFam" id="3.30.160.60:FF:000034">
    <property type="entry name" value="zinc finger protein 25"/>
    <property type="match status" value="2"/>
</dbReference>
<dbReference type="FunFam" id="3.30.160.60:FF:001868">
    <property type="entry name" value="Zinc finger protein 264"/>
    <property type="match status" value="4"/>
</dbReference>
<dbReference type="FunFam" id="3.30.160.60:FF:000120">
    <property type="entry name" value="Zinc finger protein 430"/>
    <property type="match status" value="2"/>
</dbReference>
<dbReference type="FunFam" id="3.30.160.60:FF:000362">
    <property type="entry name" value="Zinc finger protein 606"/>
    <property type="match status" value="4"/>
</dbReference>
<dbReference type="FunFam" id="3.30.160.60:FF:002709">
    <property type="entry name" value="Zinc finger protein 724"/>
    <property type="match status" value="1"/>
</dbReference>
<dbReference type="FunFam" id="3.30.160.60:FF:002705">
    <property type="entry name" value="Zinc finger protein 732"/>
    <property type="match status" value="1"/>
</dbReference>
<dbReference type="FunFam" id="3.30.160.60:FF:001933">
    <property type="entry name" value="Zinc finger protein 870"/>
    <property type="match status" value="1"/>
</dbReference>
<dbReference type="FunFam" id="3.30.160.60:FF:002483">
    <property type="entry name" value="Zinc finger protein 90"/>
    <property type="match status" value="1"/>
</dbReference>
<dbReference type="Gene3D" id="6.10.140.140">
    <property type="match status" value="1"/>
</dbReference>
<dbReference type="Gene3D" id="3.30.160.60">
    <property type="entry name" value="Classic Zinc Finger"/>
    <property type="match status" value="17"/>
</dbReference>
<dbReference type="InterPro" id="IPR001909">
    <property type="entry name" value="KRAB"/>
</dbReference>
<dbReference type="InterPro" id="IPR036051">
    <property type="entry name" value="KRAB_dom_sf"/>
</dbReference>
<dbReference type="InterPro" id="IPR050331">
    <property type="entry name" value="Zinc_finger"/>
</dbReference>
<dbReference type="InterPro" id="IPR036236">
    <property type="entry name" value="Znf_C2H2_sf"/>
</dbReference>
<dbReference type="InterPro" id="IPR013087">
    <property type="entry name" value="Znf_C2H2_type"/>
</dbReference>
<dbReference type="PANTHER" id="PTHR16515">
    <property type="entry name" value="PR DOMAIN ZINC FINGER PROTEIN"/>
    <property type="match status" value="1"/>
</dbReference>
<dbReference type="PANTHER" id="PTHR16515:SF51">
    <property type="entry name" value="ZINC FINGER PROTEIN 833-RELATED"/>
    <property type="match status" value="1"/>
</dbReference>
<dbReference type="Pfam" id="PF01352">
    <property type="entry name" value="KRAB"/>
    <property type="match status" value="1"/>
</dbReference>
<dbReference type="Pfam" id="PF00096">
    <property type="entry name" value="zf-C2H2"/>
    <property type="match status" value="8"/>
</dbReference>
<dbReference type="Pfam" id="PF13465">
    <property type="entry name" value="zf-H2C2_2"/>
    <property type="match status" value="2"/>
</dbReference>
<dbReference type="SMART" id="SM00349">
    <property type="entry name" value="KRAB"/>
    <property type="match status" value="1"/>
</dbReference>
<dbReference type="SMART" id="SM00355">
    <property type="entry name" value="ZnF_C2H2"/>
    <property type="match status" value="16"/>
</dbReference>
<dbReference type="SUPFAM" id="SSF57667">
    <property type="entry name" value="beta-beta-alpha zinc fingers"/>
    <property type="match status" value="10"/>
</dbReference>
<dbReference type="SUPFAM" id="SSF109640">
    <property type="entry name" value="KRAB domain (Kruppel-associated box)"/>
    <property type="match status" value="1"/>
</dbReference>
<dbReference type="PROSITE" id="PS50805">
    <property type="entry name" value="KRAB"/>
    <property type="match status" value="1"/>
</dbReference>
<dbReference type="PROSITE" id="PS00028">
    <property type="entry name" value="ZINC_FINGER_C2H2_1"/>
    <property type="match status" value="10"/>
</dbReference>
<dbReference type="PROSITE" id="PS50157">
    <property type="entry name" value="ZINC_FINGER_C2H2_2"/>
    <property type="match status" value="16"/>
</dbReference>